<organism>
    <name type="scientific">Roseiflexus castenholzii (strain DSM 13941 / HLO8)</name>
    <dbReference type="NCBI Taxonomy" id="383372"/>
    <lineage>
        <taxon>Bacteria</taxon>
        <taxon>Bacillati</taxon>
        <taxon>Chloroflexota</taxon>
        <taxon>Chloroflexia</taxon>
        <taxon>Chloroflexales</taxon>
        <taxon>Roseiflexineae</taxon>
        <taxon>Roseiflexaceae</taxon>
        <taxon>Roseiflexus</taxon>
    </lineage>
</organism>
<gene>
    <name evidence="1" type="primary">rplU</name>
    <name type="ordered locus">Rcas_2001</name>
</gene>
<dbReference type="EMBL" id="CP000804">
    <property type="protein sequence ID" value="ABU58089.1"/>
    <property type="molecule type" value="Genomic_DNA"/>
</dbReference>
<dbReference type="RefSeq" id="WP_012120513.1">
    <property type="nucleotide sequence ID" value="NC_009767.1"/>
</dbReference>
<dbReference type="SMR" id="A7NKR9"/>
<dbReference type="STRING" id="383372.Rcas_2001"/>
<dbReference type="KEGG" id="rca:Rcas_2001"/>
<dbReference type="eggNOG" id="COG0261">
    <property type="taxonomic scope" value="Bacteria"/>
</dbReference>
<dbReference type="HOGENOM" id="CLU_061463_3_2_0"/>
<dbReference type="OrthoDB" id="9813334at2"/>
<dbReference type="Proteomes" id="UP000000263">
    <property type="component" value="Chromosome"/>
</dbReference>
<dbReference type="GO" id="GO:0005737">
    <property type="term" value="C:cytoplasm"/>
    <property type="evidence" value="ECO:0007669"/>
    <property type="project" value="UniProtKB-ARBA"/>
</dbReference>
<dbReference type="GO" id="GO:1990904">
    <property type="term" value="C:ribonucleoprotein complex"/>
    <property type="evidence" value="ECO:0007669"/>
    <property type="project" value="UniProtKB-KW"/>
</dbReference>
<dbReference type="GO" id="GO:0005840">
    <property type="term" value="C:ribosome"/>
    <property type="evidence" value="ECO:0007669"/>
    <property type="project" value="UniProtKB-KW"/>
</dbReference>
<dbReference type="GO" id="GO:0019843">
    <property type="term" value="F:rRNA binding"/>
    <property type="evidence" value="ECO:0007669"/>
    <property type="project" value="UniProtKB-UniRule"/>
</dbReference>
<dbReference type="GO" id="GO:0003735">
    <property type="term" value="F:structural constituent of ribosome"/>
    <property type="evidence" value="ECO:0007669"/>
    <property type="project" value="InterPro"/>
</dbReference>
<dbReference type="GO" id="GO:0006412">
    <property type="term" value="P:translation"/>
    <property type="evidence" value="ECO:0007669"/>
    <property type="project" value="UniProtKB-UniRule"/>
</dbReference>
<dbReference type="HAMAP" id="MF_01363">
    <property type="entry name" value="Ribosomal_bL21"/>
    <property type="match status" value="1"/>
</dbReference>
<dbReference type="InterPro" id="IPR028909">
    <property type="entry name" value="bL21-like"/>
</dbReference>
<dbReference type="InterPro" id="IPR036164">
    <property type="entry name" value="bL21-like_sf"/>
</dbReference>
<dbReference type="InterPro" id="IPR001787">
    <property type="entry name" value="Ribosomal_bL21"/>
</dbReference>
<dbReference type="InterPro" id="IPR018258">
    <property type="entry name" value="Ribosomal_bL21_CS"/>
</dbReference>
<dbReference type="NCBIfam" id="TIGR00061">
    <property type="entry name" value="L21"/>
    <property type="match status" value="1"/>
</dbReference>
<dbReference type="PANTHER" id="PTHR21349">
    <property type="entry name" value="50S RIBOSOMAL PROTEIN L21"/>
    <property type="match status" value="1"/>
</dbReference>
<dbReference type="PANTHER" id="PTHR21349:SF0">
    <property type="entry name" value="LARGE RIBOSOMAL SUBUNIT PROTEIN BL21M"/>
    <property type="match status" value="1"/>
</dbReference>
<dbReference type="Pfam" id="PF00829">
    <property type="entry name" value="Ribosomal_L21p"/>
    <property type="match status" value="1"/>
</dbReference>
<dbReference type="SUPFAM" id="SSF141091">
    <property type="entry name" value="L21p-like"/>
    <property type="match status" value="1"/>
</dbReference>
<dbReference type="PROSITE" id="PS01169">
    <property type="entry name" value="RIBOSOMAL_L21"/>
    <property type="match status" value="1"/>
</dbReference>
<name>RL21_ROSCS</name>
<evidence type="ECO:0000255" key="1">
    <source>
        <dbReference type="HAMAP-Rule" id="MF_01363"/>
    </source>
</evidence>
<evidence type="ECO:0000305" key="2"/>
<reference key="1">
    <citation type="submission" date="2007-08" db="EMBL/GenBank/DDBJ databases">
        <title>Complete sequence of Roseiflexus castenholzii DSM 13941.</title>
        <authorList>
            <consortium name="US DOE Joint Genome Institute"/>
            <person name="Copeland A."/>
            <person name="Lucas S."/>
            <person name="Lapidus A."/>
            <person name="Barry K."/>
            <person name="Glavina del Rio T."/>
            <person name="Dalin E."/>
            <person name="Tice H."/>
            <person name="Pitluck S."/>
            <person name="Thompson L.S."/>
            <person name="Brettin T."/>
            <person name="Bruce D."/>
            <person name="Detter J.C."/>
            <person name="Han C."/>
            <person name="Tapia R."/>
            <person name="Schmutz J."/>
            <person name="Larimer F."/>
            <person name="Land M."/>
            <person name="Hauser L."/>
            <person name="Kyrpides N."/>
            <person name="Mikhailova N."/>
            <person name="Bryant D.A."/>
            <person name="Hanada S."/>
            <person name="Tsukatani Y."/>
            <person name="Richardson P."/>
        </authorList>
    </citation>
    <scope>NUCLEOTIDE SEQUENCE [LARGE SCALE GENOMIC DNA]</scope>
    <source>
        <strain>DSM 13941 / HLO8</strain>
    </source>
</reference>
<protein>
    <recommendedName>
        <fullName evidence="1">Large ribosomal subunit protein bL21</fullName>
    </recommendedName>
    <alternativeName>
        <fullName evidence="2">50S ribosomal protein L21</fullName>
    </alternativeName>
</protein>
<comment type="function">
    <text evidence="1">This protein binds to 23S rRNA in the presence of protein L20.</text>
</comment>
<comment type="subunit">
    <text evidence="1">Part of the 50S ribosomal subunit. Contacts protein L20.</text>
</comment>
<comment type="similarity">
    <text evidence="1">Belongs to the bacterial ribosomal protein bL21 family.</text>
</comment>
<sequence>MYAIVRDRGMQYRVEEGQTLRIALLDAEPGSAIELGEVLLIGGEMPLVGAPTVDGAKVLATVLGEEKGDKIVVFRYKNKKRYRRRTGHRQEYTRVSIDKIVVGANEQHVTNTPEGETNGA</sequence>
<keyword id="KW-1185">Reference proteome</keyword>
<keyword id="KW-0687">Ribonucleoprotein</keyword>
<keyword id="KW-0689">Ribosomal protein</keyword>
<keyword id="KW-0694">RNA-binding</keyword>
<keyword id="KW-0699">rRNA-binding</keyword>
<feature type="chain" id="PRO_1000086994" description="Large ribosomal subunit protein bL21">
    <location>
        <begin position="1"/>
        <end position="120"/>
    </location>
</feature>
<accession>A7NKR9</accession>
<proteinExistence type="inferred from homology"/>